<accession>Q3K1J5</accession>
<reference key="1">
    <citation type="journal article" date="2005" name="Proc. Natl. Acad. Sci. U.S.A.">
        <title>Genome analysis of multiple pathogenic isolates of Streptococcus agalactiae: implications for the microbial 'pan-genome'.</title>
        <authorList>
            <person name="Tettelin H."/>
            <person name="Masignani V."/>
            <person name="Cieslewicz M.J."/>
            <person name="Donati C."/>
            <person name="Medini D."/>
            <person name="Ward N.L."/>
            <person name="Angiuoli S.V."/>
            <person name="Crabtree J."/>
            <person name="Jones A.L."/>
            <person name="Durkin A.S."/>
            <person name="DeBoy R.T."/>
            <person name="Davidsen T.M."/>
            <person name="Mora M."/>
            <person name="Scarselli M."/>
            <person name="Margarit y Ros I."/>
            <person name="Peterson J.D."/>
            <person name="Hauser C.R."/>
            <person name="Sundaram J.P."/>
            <person name="Nelson W.C."/>
            <person name="Madupu R."/>
            <person name="Brinkac L.M."/>
            <person name="Dodson R.J."/>
            <person name="Rosovitz M.J."/>
            <person name="Sullivan S.A."/>
            <person name="Daugherty S.C."/>
            <person name="Haft D.H."/>
            <person name="Selengut J."/>
            <person name="Gwinn M.L."/>
            <person name="Zhou L."/>
            <person name="Zafar N."/>
            <person name="Khouri H."/>
            <person name="Radune D."/>
            <person name="Dimitrov G."/>
            <person name="Watkins K."/>
            <person name="O'Connor K.J."/>
            <person name="Smith S."/>
            <person name="Utterback T.R."/>
            <person name="White O."/>
            <person name="Rubens C.E."/>
            <person name="Grandi G."/>
            <person name="Madoff L.C."/>
            <person name="Kasper D.L."/>
            <person name="Telford J.L."/>
            <person name="Wessels M.R."/>
            <person name="Rappuoli R."/>
            <person name="Fraser C.M."/>
        </authorList>
    </citation>
    <scope>NUCLEOTIDE SEQUENCE [LARGE SCALE GENOMIC DNA]</scope>
    <source>
        <strain>ATCC 27591 / A909 / CDC SS700</strain>
    </source>
</reference>
<evidence type="ECO:0000255" key="1">
    <source>
        <dbReference type="HAMAP-Rule" id="MF_01347"/>
    </source>
</evidence>
<comment type="function">
    <text evidence="1">Produces ATP from ADP in the presence of a proton gradient across the membrane. The catalytic sites are hosted primarily by the beta subunits.</text>
</comment>
<comment type="catalytic activity">
    <reaction evidence="1">
        <text>ATP + H2O + 4 H(+)(in) = ADP + phosphate + 5 H(+)(out)</text>
        <dbReference type="Rhea" id="RHEA:57720"/>
        <dbReference type="ChEBI" id="CHEBI:15377"/>
        <dbReference type="ChEBI" id="CHEBI:15378"/>
        <dbReference type="ChEBI" id="CHEBI:30616"/>
        <dbReference type="ChEBI" id="CHEBI:43474"/>
        <dbReference type="ChEBI" id="CHEBI:456216"/>
        <dbReference type="EC" id="7.1.2.2"/>
    </reaction>
</comment>
<comment type="subunit">
    <text evidence="1">F-type ATPases have 2 components, CF(1) - the catalytic core - and CF(0) - the membrane proton channel. CF(1) has five subunits: alpha(3), beta(3), gamma(1), delta(1), epsilon(1). CF(0) has three main subunits: a(1), b(2) and c(9-12). The alpha and beta chains form an alternating ring which encloses part of the gamma chain. CF(1) is attached to CF(0) by a central stalk formed by the gamma and epsilon chains, while a peripheral stalk is formed by the delta and b chains.</text>
</comment>
<comment type="subcellular location">
    <subcellularLocation>
        <location evidence="1">Cell membrane</location>
        <topology evidence="1">Peripheral membrane protein</topology>
    </subcellularLocation>
</comment>
<comment type="similarity">
    <text evidence="1">Belongs to the ATPase alpha/beta chains family.</text>
</comment>
<name>ATPB_STRA1</name>
<proteinExistence type="inferred from homology"/>
<sequence length="468" mass="50944">MSSGKIAQVVGPVVDVVFASGDKLPEINNALIVYKNGDKSQKVVLEVALELGDGLVRTIAMESTDGLTRGLEVLDTGRAISVPVGKDTLGRVFNVLGDAIDLEEPFAEDAERQPIHKKAPSFDELSTSSEILETGIKVIDLLAPYLKGGKVGLFGGAGVGKTVLIQELIHNIAQEHGGISVFTGVGERTREGNDLYWEMKESGVIEKTAMVFGQMNEPPGARMRVALTGLTIAEYFRDVEGQDVLLFIDNIFRFTQAGSEVSALLGRMPSAVGYQPTLATEMGQLQERITSTKKGSVTSIQAIYVPADDYTDPAPATAFAHLDSTTNLERKLTQMGIYPAVDPLASSSRALTPEIVGDEHYEVATEVQRVLQRYRELQDIIAILGMDELSDEEKTLVGRARRIQFFLSQNFNVAETFTGQPGSYVPVEETVRGFKEILDGKHDQIPEDAFRMVGGIEDVIAKAEKMNY</sequence>
<feature type="chain" id="PRO_0000254386" description="ATP synthase subunit beta">
    <location>
        <begin position="1"/>
        <end position="468"/>
    </location>
</feature>
<feature type="binding site" evidence="1">
    <location>
        <begin position="155"/>
        <end position="162"/>
    </location>
    <ligand>
        <name>ATP</name>
        <dbReference type="ChEBI" id="CHEBI:30616"/>
    </ligand>
</feature>
<keyword id="KW-0066">ATP synthesis</keyword>
<keyword id="KW-0067">ATP-binding</keyword>
<keyword id="KW-1003">Cell membrane</keyword>
<keyword id="KW-0139">CF(1)</keyword>
<keyword id="KW-0375">Hydrogen ion transport</keyword>
<keyword id="KW-0406">Ion transport</keyword>
<keyword id="KW-0472">Membrane</keyword>
<keyword id="KW-0547">Nucleotide-binding</keyword>
<keyword id="KW-1278">Translocase</keyword>
<keyword id="KW-0813">Transport</keyword>
<gene>
    <name evidence="1" type="primary">atpD</name>
    <name type="ordered locus">SAK_0986</name>
</gene>
<dbReference type="EC" id="7.1.2.2" evidence="1"/>
<dbReference type="EMBL" id="CP000114">
    <property type="protein sequence ID" value="ABA44420.1"/>
    <property type="molecule type" value="Genomic_DNA"/>
</dbReference>
<dbReference type="RefSeq" id="WP_000094375.1">
    <property type="nucleotide sequence ID" value="NC_007432.1"/>
</dbReference>
<dbReference type="SMR" id="Q3K1J5"/>
<dbReference type="GeneID" id="66885813"/>
<dbReference type="KEGG" id="sak:SAK_0986"/>
<dbReference type="HOGENOM" id="CLU_022398_0_2_9"/>
<dbReference type="GO" id="GO:0005886">
    <property type="term" value="C:plasma membrane"/>
    <property type="evidence" value="ECO:0007669"/>
    <property type="project" value="UniProtKB-SubCell"/>
</dbReference>
<dbReference type="GO" id="GO:0045259">
    <property type="term" value="C:proton-transporting ATP synthase complex"/>
    <property type="evidence" value="ECO:0007669"/>
    <property type="project" value="UniProtKB-KW"/>
</dbReference>
<dbReference type="GO" id="GO:0005524">
    <property type="term" value="F:ATP binding"/>
    <property type="evidence" value="ECO:0007669"/>
    <property type="project" value="UniProtKB-UniRule"/>
</dbReference>
<dbReference type="GO" id="GO:0016887">
    <property type="term" value="F:ATP hydrolysis activity"/>
    <property type="evidence" value="ECO:0007669"/>
    <property type="project" value="InterPro"/>
</dbReference>
<dbReference type="GO" id="GO:0046933">
    <property type="term" value="F:proton-transporting ATP synthase activity, rotational mechanism"/>
    <property type="evidence" value="ECO:0007669"/>
    <property type="project" value="UniProtKB-UniRule"/>
</dbReference>
<dbReference type="CDD" id="cd18110">
    <property type="entry name" value="ATP-synt_F1_beta_C"/>
    <property type="match status" value="1"/>
</dbReference>
<dbReference type="CDD" id="cd18115">
    <property type="entry name" value="ATP-synt_F1_beta_N"/>
    <property type="match status" value="1"/>
</dbReference>
<dbReference type="CDD" id="cd01133">
    <property type="entry name" value="F1-ATPase_beta_CD"/>
    <property type="match status" value="1"/>
</dbReference>
<dbReference type="FunFam" id="1.10.1140.10:FF:000001">
    <property type="entry name" value="ATP synthase subunit beta"/>
    <property type="match status" value="1"/>
</dbReference>
<dbReference type="FunFam" id="2.40.10.170:FF:000005">
    <property type="entry name" value="ATP synthase subunit beta"/>
    <property type="match status" value="1"/>
</dbReference>
<dbReference type="FunFam" id="3.40.50.300:FF:000004">
    <property type="entry name" value="ATP synthase subunit beta"/>
    <property type="match status" value="1"/>
</dbReference>
<dbReference type="Gene3D" id="2.40.10.170">
    <property type="match status" value="1"/>
</dbReference>
<dbReference type="Gene3D" id="1.10.1140.10">
    <property type="entry name" value="Bovine Mitochondrial F1-atpase, Atp Synthase Beta Chain, Chain D, domain 3"/>
    <property type="match status" value="1"/>
</dbReference>
<dbReference type="Gene3D" id="3.40.50.300">
    <property type="entry name" value="P-loop containing nucleotide triphosphate hydrolases"/>
    <property type="match status" value="1"/>
</dbReference>
<dbReference type="HAMAP" id="MF_01347">
    <property type="entry name" value="ATP_synth_beta_bact"/>
    <property type="match status" value="1"/>
</dbReference>
<dbReference type="InterPro" id="IPR003593">
    <property type="entry name" value="AAA+_ATPase"/>
</dbReference>
<dbReference type="InterPro" id="IPR055190">
    <property type="entry name" value="ATP-synt_VA_C"/>
</dbReference>
<dbReference type="InterPro" id="IPR005722">
    <property type="entry name" value="ATP_synth_F1_bsu"/>
</dbReference>
<dbReference type="InterPro" id="IPR020003">
    <property type="entry name" value="ATPase_a/bsu_AS"/>
</dbReference>
<dbReference type="InterPro" id="IPR050053">
    <property type="entry name" value="ATPase_alpha/beta_chains"/>
</dbReference>
<dbReference type="InterPro" id="IPR004100">
    <property type="entry name" value="ATPase_F1/V1/A1_a/bsu_N"/>
</dbReference>
<dbReference type="InterPro" id="IPR036121">
    <property type="entry name" value="ATPase_F1/V1/A1_a/bsu_N_sf"/>
</dbReference>
<dbReference type="InterPro" id="IPR000194">
    <property type="entry name" value="ATPase_F1/V1/A1_a/bsu_nucl-bd"/>
</dbReference>
<dbReference type="InterPro" id="IPR024034">
    <property type="entry name" value="ATPase_F1/V1_b/a_C"/>
</dbReference>
<dbReference type="InterPro" id="IPR027417">
    <property type="entry name" value="P-loop_NTPase"/>
</dbReference>
<dbReference type="NCBIfam" id="TIGR01039">
    <property type="entry name" value="atpD"/>
    <property type="match status" value="1"/>
</dbReference>
<dbReference type="PANTHER" id="PTHR15184">
    <property type="entry name" value="ATP SYNTHASE"/>
    <property type="match status" value="1"/>
</dbReference>
<dbReference type="PANTHER" id="PTHR15184:SF71">
    <property type="entry name" value="ATP SYNTHASE SUBUNIT BETA, MITOCHONDRIAL"/>
    <property type="match status" value="1"/>
</dbReference>
<dbReference type="Pfam" id="PF00006">
    <property type="entry name" value="ATP-synt_ab"/>
    <property type="match status" value="1"/>
</dbReference>
<dbReference type="Pfam" id="PF02874">
    <property type="entry name" value="ATP-synt_ab_N"/>
    <property type="match status" value="1"/>
</dbReference>
<dbReference type="Pfam" id="PF22919">
    <property type="entry name" value="ATP-synt_VA_C"/>
    <property type="match status" value="1"/>
</dbReference>
<dbReference type="SMART" id="SM00382">
    <property type="entry name" value="AAA"/>
    <property type="match status" value="1"/>
</dbReference>
<dbReference type="SUPFAM" id="SSF47917">
    <property type="entry name" value="C-terminal domain of alpha and beta subunits of F1 ATP synthase"/>
    <property type="match status" value="1"/>
</dbReference>
<dbReference type="SUPFAM" id="SSF50615">
    <property type="entry name" value="N-terminal domain of alpha and beta subunits of F1 ATP synthase"/>
    <property type="match status" value="1"/>
</dbReference>
<dbReference type="SUPFAM" id="SSF52540">
    <property type="entry name" value="P-loop containing nucleoside triphosphate hydrolases"/>
    <property type="match status" value="1"/>
</dbReference>
<dbReference type="PROSITE" id="PS00152">
    <property type="entry name" value="ATPASE_ALPHA_BETA"/>
    <property type="match status" value="1"/>
</dbReference>
<organism>
    <name type="scientific">Streptococcus agalactiae serotype Ia (strain ATCC 27591 / A909 / CDC SS700)</name>
    <dbReference type="NCBI Taxonomy" id="205921"/>
    <lineage>
        <taxon>Bacteria</taxon>
        <taxon>Bacillati</taxon>
        <taxon>Bacillota</taxon>
        <taxon>Bacilli</taxon>
        <taxon>Lactobacillales</taxon>
        <taxon>Streptococcaceae</taxon>
        <taxon>Streptococcus</taxon>
    </lineage>
</organism>
<protein>
    <recommendedName>
        <fullName evidence="1">ATP synthase subunit beta</fullName>
        <ecNumber evidence="1">7.1.2.2</ecNumber>
    </recommendedName>
    <alternativeName>
        <fullName evidence="1">ATP synthase F1 sector subunit beta</fullName>
    </alternativeName>
    <alternativeName>
        <fullName evidence="1">F-ATPase subunit beta</fullName>
    </alternativeName>
</protein>